<comment type="function">
    <text evidence="1">Core subunit of the mitochondrial membrane respiratory chain NADH dehydrogenase (Complex I) that is believed to belong to the minimal assembly required for catalysis. Complex I functions in the transfer of electrons from NADH to the respiratory chain. The immediate electron acceptor for the enzyme is believed to be ubiquinone (By similarity).</text>
</comment>
<comment type="catalytic activity">
    <reaction>
        <text>a ubiquinone + NADH + 5 H(+)(in) = a ubiquinol + NAD(+) + 4 H(+)(out)</text>
        <dbReference type="Rhea" id="RHEA:29091"/>
        <dbReference type="Rhea" id="RHEA-COMP:9565"/>
        <dbReference type="Rhea" id="RHEA-COMP:9566"/>
        <dbReference type="ChEBI" id="CHEBI:15378"/>
        <dbReference type="ChEBI" id="CHEBI:16389"/>
        <dbReference type="ChEBI" id="CHEBI:17976"/>
        <dbReference type="ChEBI" id="CHEBI:57540"/>
        <dbReference type="ChEBI" id="CHEBI:57945"/>
        <dbReference type="EC" id="7.1.1.2"/>
    </reaction>
</comment>
<comment type="subcellular location">
    <subcellularLocation>
        <location>Mitochondrion inner membrane</location>
        <topology>Multi-pass membrane protein</topology>
    </subcellularLocation>
</comment>
<comment type="similarity">
    <text evidence="3">Belongs to the complex I subunit 2 family.</text>
</comment>
<organism>
    <name type="scientific">Formosania lacustris</name>
    <name type="common">Oriental stream loach</name>
    <name type="synonym">Crossostoma lacustre</name>
    <dbReference type="NCBI Taxonomy" id="7980"/>
    <lineage>
        <taxon>Eukaryota</taxon>
        <taxon>Metazoa</taxon>
        <taxon>Chordata</taxon>
        <taxon>Craniata</taxon>
        <taxon>Vertebrata</taxon>
        <taxon>Euteleostomi</taxon>
        <taxon>Actinopterygii</taxon>
        <taxon>Neopterygii</taxon>
        <taxon>Teleostei</taxon>
        <taxon>Ostariophysi</taxon>
        <taxon>Cypriniformes</taxon>
        <taxon>Gastromyzontidae</taxon>
        <taxon>Formosania</taxon>
    </lineage>
</organism>
<geneLocation type="mitochondrion"/>
<feature type="chain" id="PRO_0000117573" description="NADH-ubiquinone oxidoreductase chain 2">
    <location>
        <begin position="1"/>
        <end position="348"/>
    </location>
</feature>
<feature type="transmembrane region" description="Helical" evidence="2">
    <location>
        <begin position="3"/>
        <end position="23"/>
    </location>
</feature>
<feature type="transmembrane region" description="Helical" evidence="2">
    <location>
        <begin position="25"/>
        <end position="45"/>
    </location>
</feature>
<feature type="transmembrane region" description="Helical" evidence="2">
    <location>
        <begin position="60"/>
        <end position="80"/>
    </location>
</feature>
<feature type="transmembrane region" description="Helical" evidence="2">
    <location>
        <begin position="99"/>
        <end position="119"/>
    </location>
</feature>
<feature type="transmembrane region" description="Helical" evidence="2">
    <location>
        <begin position="122"/>
        <end position="142"/>
    </location>
</feature>
<feature type="transmembrane region" description="Helical" evidence="2">
    <location>
        <begin position="150"/>
        <end position="170"/>
    </location>
</feature>
<feature type="transmembrane region" description="Helical" evidence="2">
    <location>
        <begin position="178"/>
        <end position="196"/>
    </location>
</feature>
<feature type="transmembrane region" description="Helical" evidence="2">
    <location>
        <begin position="200"/>
        <end position="219"/>
    </location>
</feature>
<feature type="transmembrane region" description="Helical" evidence="2">
    <location>
        <begin position="246"/>
        <end position="266"/>
    </location>
</feature>
<feature type="transmembrane region" description="Helical" evidence="2">
    <location>
        <begin position="274"/>
        <end position="294"/>
    </location>
</feature>
<feature type="transmembrane region" description="Helical" evidence="2">
    <location>
        <begin position="328"/>
        <end position="348"/>
    </location>
</feature>
<name>NU2M_FORLA</name>
<proteinExistence type="inferred from homology"/>
<dbReference type="EC" id="7.1.1.2"/>
<dbReference type="EMBL" id="M91245">
    <property type="protein sequence ID" value="AAB96812.1"/>
    <property type="molecule type" value="Genomic_DNA"/>
</dbReference>
<dbReference type="PIR" id="S35463">
    <property type="entry name" value="S35463"/>
</dbReference>
<dbReference type="RefSeq" id="NP_008304.1">
    <property type="nucleotide sequence ID" value="NC_001727.1"/>
</dbReference>
<dbReference type="SMR" id="P34187"/>
<dbReference type="GeneID" id="807991"/>
<dbReference type="CTD" id="4536"/>
<dbReference type="GO" id="GO:0005743">
    <property type="term" value="C:mitochondrial inner membrane"/>
    <property type="evidence" value="ECO:0007669"/>
    <property type="project" value="UniProtKB-SubCell"/>
</dbReference>
<dbReference type="GO" id="GO:0008137">
    <property type="term" value="F:NADH dehydrogenase (ubiquinone) activity"/>
    <property type="evidence" value="ECO:0007669"/>
    <property type="project" value="UniProtKB-EC"/>
</dbReference>
<dbReference type="GO" id="GO:0006120">
    <property type="term" value="P:mitochondrial electron transport, NADH to ubiquinone"/>
    <property type="evidence" value="ECO:0007669"/>
    <property type="project" value="InterPro"/>
</dbReference>
<dbReference type="InterPro" id="IPR050175">
    <property type="entry name" value="Complex_I_Subunit_2"/>
</dbReference>
<dbReference type="InterPro" id="IPR010933">
    <property type="entry name" value="NADH_DH_su2_C"/>
</dbReference>
<dbReference type="InterPro" id="IPR003917">
    <property type="entry name" value="NADH_UbQ_OxRdtase_chain2"/>
</dbReference>
<dbReference type="InterPro" id="IPR001750">
    <property type="entry name" value="ND/Mrp_TM"/>
</dbReference>
<dbReference type="PANTHER" id="PTHR46552">
    <property type="entry name" value="NADH-UBIQUINONE OXIDOREDUCTASE CHAIN 2"/>
    <property type="match status" value="1"/>
</dbReference>
<dbReference type="PANTHER" id="PTHR46552:SF1">
    <property type="entry name" value="NADH-UBIQUINONE OXIDOREDUCTASE CHAIN 2"/>
    <property type="match status" value="1"/>
</dbReference>
<dbReference type="Pfam" id="PF06444">
    <property type="entry name" value="NADH_dehy_S2_C"/>
    <property type="match status" value="1"/>
</dbReference>
<dbReference type="Pfam" id="PF00361">
    <property type="entry name" value="Proton_antipo_M"/>
    <property type="match status" value="1"/>
</dbReference>
<dbReference type="PRINTS" id="PR01436">
    <property type="entry name" value="NADHDHGNASE2"/>
</dbReference>
<sequence>MNPYVLMILISSLGLGTTLTFASSHWLLAWMGLEINTLAILRLMAQQHHPRAVEATTKYFLTQATAAAMILFAATTNAWATGEWDINNLTHPLASSLTMMALALKVGLAPMHFWMPEVLQGLDLTMGLILSTWQKLAPFALITQMAPNTNPMLLTTLGLLSTLIGGWGGLNQTQLRKILAYSSIAHMGWMIIILQYTPQLTLIALGLYIFMTSAAFLSLKMASATKMNTLTAAWSKSPVLVSTTALTLLSLGGLPPLTGFMPKWLILQELTKQDLPATATIMALAALLSLYFYLRLSYAMALTIYPNTTNALTPWRTNTTQSTLALALMMIGALGLLPLTPTIMALFF</sequence>
<evidence type="ECO:0000250" key="1"/>
<evidence type="ECO:0000255" key="2"/>
<evidence type="ECO:0000305" key="3"/>
<gene>
    <name type="primary">MT-ND2</name>
    <name type="synonym">MTND2</name>
    <name type="synonym">NADH2</name>
    <name type="synonym">ND2</name>
</gene>
<reference key="1">
    <citation type="journal article" date="1992" name="Nucleic Acids Res.">
        <title>The complete nucleotide sequence of the Crossostoma lacustre mitochondrial genome: conservation and variations among vertebrates.</title>
        <authorList>
            <person name="Tzeng C.-S."/>
            <person name="Hui C.-F."/>
            <person name="Shen S.-C."/>
            <person name="Huang P.C."/>
        </authorList>
    </citation>
    <scope>NUCLEOTIDE SEQUENCE [GENOMIC DNA]</scope>
</reference>
<keyword id="KW-0249">Electron transport</keyword>
<keyword id="KW-0472">Membrane</keyword>
<keyword id="KW-0496">Mitochondrion</keyword>
<keyword id="KW-0999">Mitochondrion inner membrane</keyword>
<keyword id="KW-0520">NAD</keyword>
<keyword id="KW-0679">Respiratory chain</keyword>
<keyword id="KW-1278">Translocase</keyword>
<keyword id="KW-0812">Transmembrane</keyword>
<keyword id="KW-1133">Transmembrane helix</keyword>
<keyword id="KW-0813">Transport</keyword>
<keyword id="KW-0830">Ubiquinone</keyword>
<protein>
    <recommendedName>
        <fullName>NADH-ubiquinone oxidoreductase chain 2</fullName>
        <ecNumber>7.1.1.2</ecNumber>
    </recommendedName>
    <alternativeName>
        <fullName>NADH dehydrogenase subunit 2</fullName>
    </alternativeName>
</protein>
<accession>P34187</accession>